<keyword id="KW-0028">Amino-acid biosynthesis</keyword>
<keyword id="KW-0378">Hydrolase</keyword>
<keyword id="KW-0486">Methionine biosynthesis</keyword>
<evidence type="ECO:0000255" key="1">
    <source>
        <dbReference type="HAMAP-Rule" id="MF_01684"/>
    </source>
</evidence>
<reference key="1">
    <citation type="submission" date="2008-02" db="EMBL/GenBank/DDBJ databases">
        <title>Complete sequence of Yersinia pseudotuberculosis YPIII.</title>
        <authorList>
            <consortium name="US DOE Joint Genome Institute"/>
            <person name="Copeland A."/>
            <person name="Lucas S."/>
            <person name="Lapidus A."/>
            <person name="Glavina del Rio T."/>
            <person name="Dalin E."/>
            <person name="Tice H."/>
            <person name="Bruce D."/>
            <person name="Goodwin L."/>
            <person name="Pitluck S."/>
            <person name="Munk A.C."/>
            <person name="Brettin T."/>
            <person name="Detter J.C."/>
            <person name="Han C."/>
            <person name="Tapia R."/>
            <person name="Schmutz J."/>
            <person name="Larimer F."/>
            <person name="Land M."/>
            <person name="Hauser L."/>
            <person name="Challacombe J.F."/>
            <person name="Green L."/>
            <person name="Lindler L.E."/>
            <person name="Nikolich M.P."/>
            <person name="Richardson P."/>
        </authorList>
    </citation>
    <scope>NUCLEOTIDE SEQUENCE [LARGE SCALE GENOMIC DNA]</scope>
    <source>
        <strain>YPIII</strain>
    </source>
</reference>
<accession>B1JK17</accession>
<comment type="function">
    <text evidence="1">Catalyzes the irreversible cleavage of the glycosidic bond in both 5'-methylthioadenosine (MTA) and S-adenosylhomocysteine (SAH/AdoHcy) to adenine and the corresponding thioribose, 5'-methylthioribose and S-ribosylhomocysteine, respectively. Also cleaves 5'-deoxyadenosine, a toxic by-product of radical S-adenosylmethionine (SAM) enzymes, into 5-deoxyribose and adenine. Thus, is required for in vivo function of the radical SAM enzymes biotin synthase and lipoic acid synthase, that are inhibited by 5'-deoxyadenosine accumulation.</text>
</comment>
<comment type="catalytic activity">
    <reaction evidence="1">
        <text>S-adenosyl-L-homocysteine + H2O = S-(5-deoxy-D-ribos-5-yl)-L-homocysteine + adenine</text>
        <dbReference type="Rhea" id="RHEA:17805"/>
        <dbReference type="ChEBI" id="CHEBI:15377"/>
        <dbReference type="ChEBI" id="CHEBI:16708"/>
        <dbReference type="ChEBI" id="CHEBI:57856"/>
        <dbReference type="ChEBI" id="CHEBI:58195"/>
        <dbReference type="EC" id="3.2.2.9"/>
    </reaction>
</comment>
<comment type="catalytic activity">
    <reaction evidence="1">
        <text>S-methyl-5'-thioadenosine + H2O = 5-(methylsulfanyl)-D-ribose + adenine</text>
        <dbReference type="Rhea" id="RHEA:13617"/>
        <dbReference type="ChEBI" id="CHEBI:15377"/>
        <dbReference type="ChEBI" id="CHEBI:16708"/>
        <dbReference type="ChEBI" id="CHEBI:17509"/>
        <dbReference type="ChEBI" id="CHEBI:78440"/>
        <dbReference type="EC" id="3.2.2.9"/>
    </reaction>
</comment>
<comment type="catalytic activity">
    <reaction evidence="1">
        <text>5'-deoxyadenosine + H2O = 5-deoxy-D-ribose + adenine</text>
        <dbReference type="Rhea" id="RHEA:29859"/>
        <dbReference type="ChEBI" id="CHEBI:15377"/>
        <dbReference type="ChEBI" id="CHEBI:16708"/>
        <dbReference type="ChEBI" id="CHEBI:17319"/>
        <dbReference type="ChEBI" id="CHEBI:149540"/>
        <dbReference type="EC" id="3.2.2.9"/>
    </reaction>
    <physiologicalReaction direction="left-to-right" evidence="1">
        <dbReference type="Rhea" id="RHEA:29860"/>
    </physiologicalReaction>
</comment>
<comment type="pathway">
    <text evidence="1">Amino-acid biosynthesis; L-methionine biosynthesis via salvage pathway; S-methyl-5-thio-alpha-D-ribose 1-phosphate from S-methyl-5'-thioadenosine (hydrolase route): step 1/2.</text>
</comment>
<comment type="subunit">
    <text evidence="1">Homodimer.</text>
</comment>
<comment type="similarity">
    <text evidence="1">Belongs to the PNP/UDP phosphorylase family. MtnN subfamily.</text>
</comment>
<name>MTNN_YERPY</name>
<gene>
    <name evidence="1" type="primary">mtnN</name>
    <name type="ordered locus">YPK_3454</name>
</gene>
<feature type="chain" id="PRO_0000359399" description="5'-methylthioadenosine/S-adenosylhomocysteine nucleosidase">
    <location>
        <begin position="1"/>
        <end position="233"/>
    </location>
</feature>
<feature type="active site" description="Proton acceptor" evidence="1">
    <location>
        <position position="12"/>
    </location>
</feature>
<feature type="active site" description="Proton donor" evidence="1">
    <location>
        <position position="197"/>
    </location>
</feature>
<feature type="binding site" evidence="1">
    <location>
        <position position="78"/>
    </location>
    <ligand>
        <name>substrate</name>
    </ligand>
</feature>
<feature type="binding site" evidence="1">
    <location>
        <position position="152"/>
    </location>
    <ligand>
        <name>substrate</name>
    </ligand>
</feature>
<feature type="binding site" evidence="1">
    <location>
        <begin position="173"/>
        <end position="174"/>
    </location>
    <ligand>
        <name>substrate</name>
    </ligand>
</feature>
<sequence length="233" mass="24566">MKVGIIGAMEEEVTLLRDRIENRQTLARAGCEIYTGQLNGIDVALLKSGIGKVAAAMGTTLLLEHCQPDLVINTGSAGGLASSLKVGDIVVSNEVRYHDADVTAFGYEPGQMAGCPAAFVADEDLIALAENCIQQLKLNAVRGLICSGDAFINGAEPLARIRAAFPTVAAVEMEAAAIGHVCYLFNTPFVVVRAISDVADQASHLSFEEFLVVAAKQSTLMIEAMLTTLAQRG</sequence>
<protein>
    <recommendedName>
        <fullName evidence="1">5'-methylthioadenosine/S-adenosylhomocysteine nucleosidase</fullName>
        <shortName evidence="1">MTA/SAH nucleosidase</shortName>
        <shortName evidence="1">MTAN</shortName>
        <ecNumber evidence="1">3.2.2.9</ecNumber>
    </recommendedName>
    <alternativeName>
        <fullName evidence="1">5'-deoxyadenosine nucleosidase</fullName>
        <shortName evidence="1">DOA nucleosidase</shortName>
        <shortName evidence="1">dAdo nucleosidase</shortName>
    </alternativeName>
    <alternativeName>
        <fullName evidence="1">5'-methylthioadenosine nucleosidase</fullName>
        <shortName evidence="1">MTA nucleosidase</shortName>
    </alternativeName>
    <alternativeName>
        <fullName evidence="1">S-adenosylhomocysteine nucleosidase</fullName>
        <shortName evidence="1">AdoHcy nucleosidase</shortName>
        <shortName evidence="1">SAH nucleosidase</shortName>
        <shortName evidence="1">SRH nucleosidase</shortName>
    </alternativeName>
</protein>
<dbReference type="EC" id="3.2.2.9" evidence="1"/>
<dbReference type="EMBL" id="CP000950">
    <property type="protein sequence ID" value="ACA69721.1"/>
    <property type="molecule type" value="Genomic_DNA"/>
</dbReference>
<dbReference type="RefSeq" id="WP_011191764.1">
    <property type="nucleotide sequence ID" value="NZ_CP009792.1"/>
</dbReference>
<dbReference type="SMR" id="B1JK17"/>
<dbReference type="GeneID" id="49787248"/>
<dbReference type="KEGG" id="ypy:YPK_3454"/>
<dbReference type="PATRIC" id="fig|502800.11.peg.4195"/>
<dbReference type="UniPathway" id="UPA00904">
    <property type="reaction ID" value="UER00871"/>
</dbReference>
<dbReference type="GO" id="GO:0005829">
    <property type="term" value="C:cytosol"/>
    <property type="evidence" value="ECO:0007669"/>
    <property type="project" value="TreeGrafter"/>
</dbReference>
<dbReference type="GO" id="GO:0008782">
    <property type="term" value="F:adenosylhomocysteine nucleosidase activity"/>
    <property type="evidence" value="ECO:0007669"/>
    <property type="project" value="UniProtKB-UniRule"/>
</dbReference>
<dbReference type="GO" id="GO:0008930">
    <property type="term" value="F:methylthioadenosine nucleosidase activity"/>
    <property type="evidence" value="ECO:0007669"/>
    <property type="project" value="UniProtKB-UniRule"/>
</dbReference>
<dbReference type="GO" id="GO:0019509">
    <property type="term" value="P:L-methionine salvage from methylthioadenosine"/>
    <property type="evidence" value="ECO:0007669"/>
    <property type="project" value="UniProtKB-UniRule"/>
</dbReference>
<dbReference type="GO" id="GO:0019284">
    <property type="term" value="P:L-methionine salvage from S-adenosylmethionine"/>
    <property type="evidence" value="ECO:0007669"/>
    <property type="project" value="TreeGrafter"/>
</dbReference>
<dbReference type="GO" id="GO:0046124">
    <property type="term" value="P:purine deoxyribonucleoside catabolic process"/>
    <property type="evidence" value="ECO:0007669"/>
    <property type="project" value="UniProtKB-UniRule"/>
</dbReference>
<dbReference type="CDD" id="cd09008">
    <property type="entry name" value="MTAN"/>
    <property type="match status" value="1"/>
</dbReference>
<dbReference type="FunFam" id="3.40.50.1580:FF:000001">
    <property type="entry name" value="MTA/SAH nucleosidase family protein"/>
    <property type="match status" value="1"/>
</dbReference>
<dbReference type="Gene3D" id="3.40.50.1580">
    <property type="entry name" value="Nucleoside phosphorylase domain"/>
    <property type="match status" value="1"/>
</dbReference>
<dbReference type="HAMAP" id="MF_01684">
    <property type="entry name" value="Salvage_MtnN"/>
    <property type="match status" value="1"/>
</dbReference>
<dbReference type="InterPro" id="IPR010049">
    <property type="entry name" value="MTA_SAH_Nsdase"/>
</dbReference>
<dbReference type="InterPro" id="IPR000845">
    <property type="entry name" value="Nucleoside_phosphorylase_d"/>
</dbReference>
<dbReference type="InterPro" id="IPR035994">
    <property type="entry name" value="Nucleoside_phosphorylase_sf"/>
</dbReference>
<dbReference type="NCBIfam" id="TIGR01704">
    <property type="entry name" value="MTA_SAH-Nsdase"/>
    <property type="match status" value="1"/>
</dbReference>
<dbReference type="NCBIfam" id="NF004079">
    <property type="entry name" value="PRK05584.1"/>
    <property type="match status" value="1"/>
</dbReference>
<dbReference type="PANTHER" id="PTHR46832">
    <property type="entry name" value="5'-METHYLTHIOADENOSINE/S-ADENOSYLHOMOCYSTEINE NUCLEOSIDASE"/>
    <property type="match status" value="1"/>
</dbReference>
<dbReference type="PANTHER" id="PTHR46832:SF1">
    <property type="entry name" value="5'-METHYLTHIOADENOSINE_S-ADENOSYLHOMOCYSTEINE NUCLEOSIDASE"/>
    <property type="match status" value="1"/>
</dbReference>
<dbReference type="Pfam" id="PF01048">
    <property type="entry name" value="PNP_UDP_1"/>
    <property type="match status" value="1"/>
</dbReference>
<dbReference type="SUPFAM" id="SSF53167">
    <property type="entry name" value="Purine and uridine phosphorylases"/>
    <property type="match status" value="1"/>
</dbReference>
<proteinExistence type="inferred from homology"/>
<organism>
    <name type="scientific">Yersinia pseudotuberculosis serotype O:3 (strain YPIII)</name>
    <dbReference type="NCBI Taxonomy" id="502800"/>
    <lineage>
        <taxon>Bacteria</taxon>
        <taxon>Pseudomonadati</taxon>
        <taxon>Pseudomonadota</taxon>
        <taxon>Gammaproteobacteria</taxon>
        <taxon>Enterobacterales</taxon>
        <taxon>Yersiniaceae</taxon>
        <taxon>Yersinia</taxon>
    </lineage>
</organism>